<comment type="function">
    <text evidence="1">Catalyzes the formation of 6,7-dimethyl-8-ribityllumazine by condensation of 5-amino-6-(D-ribitylamino)uracil with 3,4-dihydroxy-2-butanone 4-phosphate. This is the penultimate step in the biosynthesis of riboflavin.</text>
</comment>
<comment type="catalytic activity">
    <reaction evidence="1">
        <text>(2S)-2-hydroxy-3-oxobutyl phosphate + 5-amino-6-(D-ribitylamino)uracil = 6,7-dimethyl-8-(1-D-ribityl)lumazine + phosphate + 2 H2O + H(+)</text>
        <dbReference type="Rhea" id="RHEA:26152"/>
        <dbReference type="ChEBI" id="CHEBI:15377"/>
        <dbReference type="ChEBI" id="CHEBI:15378"/>
        <dbReference type="ChEBI" id="CHEBI:15934"/>
        <dbReference type="ChEBI" id="CHEBI:43474"/>
        <dbReference type="ChEBI" id="CHEBI:58201"/>
        <dbReference type="ChEBI" id="CHEBI:58830"/>
        <dbReference type="EC" id="2.5.1.78"/>
    </reaction>
</comment>
<comment type="pathway">
    <text evidence="1">Cofactor biosynthesis; riboflavin biosynthesis; riboflavin from 2-hydroxy-3-oxobutyl phosphate and 5-amino-6-(D-ribitylamino)uracil: step 1/2.</text>
</comment>
<comment type="subunit">
    <text evidence="1">Forms an icosahedral capsid composed of 60 subunits, arranged as a dodecamer of pentamers.</text>
</comment>
<comment type="similarity">
    <text evidence="1">Belongs to the DMRL synthase family.</text>
</comment>
<name>RISB_XANCB</name>
<organism>
    <name type="scientific">Xanthomonas campestris pv. campestris (strain B100)</name>
    <dbReference type="NCBI Taxonomy" id="509169"/>
    <lineage>
        <taxon>Bacteria</taxon>
        <taxon>Pseudomonadati</taxon>
        <taxon>Pseudomonadota</taxon>
        <taxon>Gammaproteobacteria</taxon>
        <taxon>Lysobacterales</taxon>
        <taxon>Lysobacteraceae</taxon>
        <taxon>Xanthomonas</taxon>
    </lineage>
</organism>
<protein>
    <recommendedName>
        <fullName evidence="1">6,7-dimethyl-8-ribityllumazine synthase</fullName>
        <shortName evidence="1">DMRL synthase</shortName>
        <shortName evidence="1">LS</shortName>
        <shortName evidence="1">Lumazine synthase</shortName>
        <ecNumber evidence="1">2.5.1.78</ecNumber>
    </recommendedName>
</protein>
<sequence length="154" mass="16260">MTHYEGDLRPTTARFVIIASRWNARITDALVTGARQSLAGNGIGEDAIDVVRVPGAWEIPMAANRVAQGGQHAAIIALGCVIRGDTRHYEHVADLCAEGLMSVQLQTGVPVLNGVLAVERVEDAEARAGGSHGNKGEECALAALELVNLMELLP</sequence>
<accession>B0RVD2</accession>
<gene>
    <name evidence="1" type="primary">ribH</name>
    <name type="ordered locus">xcc-b100_3658</name>
</gene>
<keyword id="KW-0686">Riboflavin biosynthesis</keyword>
<keyword id="KW-0808">Transferase</keyword>
<reference key="1">
    <citation type="journal article" date="2008" name="J. Biotechnol.">
        <title>The genome of Xanthomonas campestris pv. campestris B100 and its use for the reconstruction of metabolic pathways involved in xanthan biosynthesis.</title>
        <authorList>
            <person name="Vorhoelter F.-J."/>
            <person name="Schneiker S."/>
            <person name="Goesmann A."/>
            <person name="Krause L."/>
            <person name="Bekel T."/>
            <person name="Kaiser O."/>
            <person name="Linke B."/>
            <person name="Patschkowski T."/>
            <person name="Rueckert C."/>
            <person name="Schmid J."/>
            <person name="Sidhu V.K."/>
            <person name="Sieber V."/>
            <person name="Tauch A."/>
            <person name="Watt S.A."/>
            <person name="Weisshaar B."/>
            <person name="Becker A."/>
            <person name="Niehaus K."/>
            <person name="Puehler A."/>
        </authorList>
    </citation>
    <scope>NUCLEOTIDE SEQUENCE [LARGE SCALE GENOMIC DNA]</scope>
    <source>
        <strain>B100</strain>
    </source>
</reference>
<dbReference type="EC" id="2.5.1.78" evidence="1"/>
<dbReference type="EMBL" id="AM920689">
    <property type="protein sequence ID" value="CAP53023.1"/>
    <property type="molecule type" value="Genomic_DNA"/>
</dbReference>
<dbReference type="SMR" id="B0RVD2"/>
<dbReference type="KEGG" id="xca:xcc-b100_3658"/>
<dbReference type="HOGENOM" id="CLU_089358_1_2_6"/>
<dbReference type="UniPathway" id="UPA00275">
    <property type="reaction ID" value="UER00404"/>
</dbReference>
<dbReference type="Proteomes" id="UP000001188">
    <property type="component" value="Chromosome"/>
</dbReference>
<dbReference type="GO" id="GO:0005829">
    <property type="term" value="C:cytosol"/>
    <property type="evidence" value="ECO:0007669"/>
    <property type="project" value="TreeGrafter"/>
</dbReference>
<dbReference type="GO" id="GO:0009349">
    <property type="term" value="C:riboflavin synthase complex"/>
    <property type="evidence" value="ECO:0007669"/>
    <property type="project" value="InterPro"/>
</dbReference>
<dbReference type="GO" id="GO:0000906">
    <property type="term" value="F:6,7-dimethyl-8-ribityllumazine synthase activity"/>
    <property type="evidence" value="ECO:0007669"/>
    <property type="project" value="UniProtKB-UniRule"/>
</dbReference>
<dbReference type="GO" id="GO:0009231">
    <property type="term" value="P:riboflavin biosynthetic process"/>
    <property type="evidence" value="ECO:0007669"/>
    <property type="project" value="UniProtKB-UniRule"/>
</dbReference>
<dbReference type="CDD" id="cd09209">
    <property type="entry name" value="Lumazine_synthase-I"/>
    <property type="match status" value="1"/>
</dbReference>
<dbReference type="Gene3D" id="3.40.50.960">
    <property type="entry name" value="Lumazine/riboflavin synthase"/>
    <property type="match status" value="1"/>
</dbReference>
<dbReference type="HAMAP" id="MF_00178">
    <property type="entry name" value="Lumazine_synth"/>
    <property type="match status" value="1"/>
</dbReference>
<dbReference type="InterPro" id="IPR034964">
    <property type="entry name" value="LS"/>
</dbReference>
<dbReference type="InterPro" id="IPR002180">
    <property type="entry name" value="LS/RS"/>
</dbReference>
<dbReference type="InterPro" id="IPR036467">
    <property type="entry name" value="LS/RS_sf"/>
</dbReference>
<dbReference type="NCBIfam" id="TIGR00114">
    <property type="entry name" value="lumazine-synth"/>
    <property type="match status" value="1"/>
</dbReference>
<dbReference type="PANTHER" id="PTHR21058:SF0">
    <property type="entry name" value="6,7-DIMETHYL-8-RIBITYLLUMAZINE SYNTHASE"/>
    <property type="match status" value="1"/>
</dbReference>
<dbReference type="PANTHER" id="PTHR21058">
    <property type="entry name" value="6,7-DIMETHYL-8-RIBITYLLUMAZINE SYNTHASE DMRL SYNTHASE LUMAZINE SYNTHASE"/>
    <property type="match status" value="1"/>
</dbReference>
<dbReference type="Pfam" id="PF00885">
    <property type="entry name" value="DMRL_synthase"/>
    <property type="match status" value="1"/>
</dbReference>
<dbReference type="SUPFAM" id="SSF52121">
    <property type="entry name" value="Lumazine synthase"/>
    <property type="match status" value="1"/>
</dbReference>
<evidence type="ECO:0000255" key="1">
    <source>
        <dbReference type="HAMAP-Rule" id="MF_00178"/>
    </source>
</evidence>
<proteinExistence type="inferred from homology"/>
<feature type="chain" id="PRO_1000098250" description="6,7-dimethyl-8-ribityllumazine synthase">
    <location>
        <begin position="1"/>
        <end position="154"/>
    </location>
</feature>
<feature type="active site" description="Proton donor" evidence="1">
    <location>
        <position position="88"/>
    </location>
</feature>
<feature type="binding site" evidence="1">
    <location>
        <position position="22"/>
    </location>
    <ligand>
        <name>5-amino-6-(D-ribitylamino)uracil</name>
        <dbReference type="ChEBI" id="CHEBI:15934"/>
    </ligand>
</feature>
<feature type="binding site" evidence="1">
    <location>
        <begin position="56"/>
        <end position="58"/>
    </location>
    <ligand>
        <name>5-amino-6-(D-ribitylamino)uracil</name>
        <dbReference type="ChEBI" id="CHEBI:15934"/>
    </ligand>
</feature>
<feature type="binding site" evidence="1">
    <location>
        <begin position="80"/>
        <end position="82"/>
    </location>
    <ligand>
        <name>5-amino-6-(D-ribitylamino)uracil</name>
        <dbReference type="ChEBI" id="CHEBI:15934"/>
    </ligand>
</feature>
<feature type="binding site" evidence="1">
    <location>
        <begin position="85"/>
        <end position="86"/>
    </location>
    <ligand>
        <name>(2S)-2-hydroxy-3-oxobutyl phosphate</name>
        <dbReference type="ChEBI" id="CHEBI:58830"/>
    </ligand>
</feature>
<feature type="binding site" evidence="1">
    <location>
        <position position="113"/>
    </location>
    <ligand>
        <name>5-amino-6-(D-ribitylamino)uracil</name>
        <dbReference type="ChEBI" id="CHEBI:15934"/>
    </ligand>
</feature>
<feature type="binding site" evidence="1">
    <location>
        <position position="127"/>
    </location>
    <ligand>
        <name>(2S)-2-hydroxy-3-oxobutyl phosphate</name>
        <dbReference type="ChEBI" id="CHEBI:58830"/>
    </ligand>
</feature>